<dbReference type="EMBL" id="U28377">
    <property type="protein sequence ID" value="AAA69150.1"/>
    <property type="status" value="ALT_INIT"/>
    <property type="molecule type" value="Genomic_DNA"/>
</dbReference>
<dbReference type="EMBL" id="U00096">
    <property type="protein sequence ID" value="AAT48159.1"/>
    <property type="molecule type" value="Genomic_DNA"/>
</dbReference>
<dbReference type="EMBL" id="AP009048">
    <property type="protein sequence ID" value="BAE77044.1"/>
    <property type="molecule type" value="Genomic_DNA"/>
</dbReference>
<dbReference type="RefSeq" id="YP_026192.1">
    <property type="nucleotide sequence ID" value="NC_000913.3"/>
</dbReference>
<dbReference type="SMR" id="Q46841"/>
<dbReference type="BioGRID" id="4262371">
    <property type="interactions" value="8"/>
</dbReference>
<dbReference type="DIP" id="DIP-12208N"/>
<dbReference type="FunCoup" id="Q46841">
    <property type="interactions" value="77"/>
</dbReference>
<dbReference type="IntAct" id="Q46841">
    <property type="interactions" value="1"/>
</dbReference>
<dbReference type="STRING" id="511145.b2983"/>
<dbReference type="PaxDb" id="511145-b2983"/>
<dbReference type="EnsemblBacteria" id="AAT48159">
    <property type="protein sequence ID" value="AAT48159"/>
    <property type="gene ID" value="b2983"/>
</dbReference>
<dbReference type="GeneID" id="947716"/>
<dbReference type="KEGG" id="ecj:JW5490"/>
<dbReference type="KEGG" id="eco:b2983"/>
<dbReference type="KEGG" id="ecoc:C3026_16320"/>
<dbReference type="PATRIC" id="fig|1411691.4.peg.3747"/>
<dbReference type="EchoBASE" id="EB2823"/>
<dbReference type="eggNOG" id="COG2244">
    <property type="taxonomic scope" value="Bacteria"/>
</dbReference>
<dbReference type="HOGENOM" id="CLU_047009_0_0_6"/>
<dbReference type="InParanoid" id="Q46841"/>
<dbReference type="OMA" id="FQSWQTV"/>
<dbReference type="OrthoDB" id="493991at2"/>
<dbReference type="BioCyc" id="EcoCyc:G7549-MONOMER"/>
<dbReference type="BioCyc" id="MetaCyc:G7549-MONOMER"/>
<dbReference type="PRO" id="PR:Q46841"/>
<dbReference type="Proteomes" id="UP000000625">
    <property type="component" value="Chromosome"/>
</dbReference>
<dbReference type="GO" id="GO:0005886">
    <property type="term" value="C:plasma membrane"/>
    <property type="evidence" value="ECO:0000314"/>
    <property type="project" value="EcoCyc"/>
</dbReference>
<dbReference type="InterPro" id="IPR050833">
    <property type="entry name" value="Poly_Biosynth_Transport"/>
</dbReference>
<dbReference type="InterPro" id="IPR002797">
    <property type="entry name" value="Polysacc_synth"/>
</dbReference>
<dbReference type="PANTHER" id="PTHR30250:SF31">
    <property type="entry name" value="INNER MEMBRANE PROTEIN YGHQ"/>
    <property type="match status" value="1"/>
</dbReference>
<dbReference type="PANTHER" id="PTHR30250">
    <property type="entry name" value="PST FAMILY PREDICTED COLANIC ACID TRANSPORTER"/>
    <property type="match status" value="1"/>
</dbReference>
<dbReference type="Pfam" id="PF01943">
    <property type="entry name" value="Polysacc_synt"/>
    <property type="match status" value="1"/>
</dbReference>
<reference key="1">
    <citation type="journal article" date="1997" name="Science">
        <title>The complete genome sequence of Escherichia coli K-12.</title>
        <authorList>
            <person name="Blattner F.R."/>
            <person name="Plunkett G. III"/>
            <person name="Bloch C.A."/>
            <person name="Perna N.T."/>
            <person name="Burland V."/>
            <person name="Riley M."/>
            <person name="Collado-Vides J."/>
            <person name="Glasner J.D."/>
            <person name="Rode C.K."/>
            <person name="Mayhew G.F."/>
            <person name="Gregor J."/>
            <person name="Davis N.W."/>
            <person name="Kirkpatrick H.A."/>
            <person name="Goeden M.A."/>
            <person name="Rose D.J."/>
            <person name="Mau B."/>
            <person name="Shao Y."/>
        </authorList>
    </citation>
    <scope>NUCLEOTIDE SEQUENCE [LARGE SCALE GENOMIC DNA]</scope>
    <source>
        <strain>K12 / MG1655 / ATCC 47076</strain>
    </source>
</reference>
<reference key="2">
    <citation type="journal article" date="2006" name="Mol. Syst. Biol.">
        <title>Highly accurate genome sequences of Escherichia coli K-12 strains MG1655 and W3110.</title>
        <authorList>
            <person name="Hayashi K."/>
            <person name="Morooka N."/>
            <person name="Yamamoto Y."/>
            <person name="Fujita K."/>
            <person name="Isono K."/>
            <person name="Choi S."/>
            <person name="Ohtsubo E."/>
            <person name="Baba T."/>
            <person name="Wanner B.L."/>
            <person name="Mori H."/>
            <person name="Horiuchi T."/>
        </authorList>
    </citation>
    <scope>NUCLEOTIDE SEQUENCE [LARGE SCALE GENOMIC DNA]</scope>
    <source>
        <strain>K12 / W3110 / ATCC 27325 / DSM 5911</strain>
    </source>
</reference>
<reference key="3">
    <citation type="journal article" date="2005" name="Science">
        <title>Global topology analysis of the Escherichia coli inner membrane proteome.</title>
        <authorList>
            <person name="Daley D.O."/>
            <person name="Rapp M."/>
            <person name="Granseth E."/>
            <person name="Melen K."/>
            <person name="Drew D."/>
            <person name="von Heijne G."/>
        </authorList>
    </citation>
    <scope>TOPOLOGY [LARGE SCALE ANALYSIS]</scope>
    <source>
        <strain>K12 / MG1655 / ATCC 47076</strain>
    </source>
</reference>
<protein>
    <recommendedName>
        <fullName>Inner membrane protein YghQ</fullName>
    </recommendedName>
</protein>
<gene>
    <name type="primary">yghQ</name>
    <name type="ordered locus">b2983</name>
    <name type="ordered locus">JW5490</name>
</gene>
<feature type="chain" id="PRO_0000169389" description="Inner membrane protein YghQ">
    <location>
        <begin position="1"/>
        <end position="355"/>
    </location>
</feature>
<feature type="topological domain" description="Periplasmic" evidence="1">
    <location>
        <begin position="1"/>
        <end position="37"/>
    </location>
</feature>
<feature type="transmembrane region" description="Helical" evidence="1">
    <location>
        <begin position="38"/>
        <end position="58"/>
    </location>
</feature>
<feature type="topological domain" description="Cytoplasmic" evidence="1">
    <location>
        <begin position="59"/>
        <end position="100"/>
    </location>
</feature>
<feature type="transmembrane region" description="Helical" evidence="1">
    <location>
        <begin position="101"/>
        <end position="121"/>
    </location>
</feature>
<feature type="topological domain" description="Periplasmic" evidence="1">
    <location>
        <begin position="122"/>
        <end position="134"/>
    </location>
</feature>
<feature type="transmembrane region" description="Helical" evidence="1">
    <location>
        <begin position="135"/>
        <end position="155"/>
    </location>
</feature>
<feature type="topological domain" description="Cytoplasmic" evidence="1">
    <location>
        <begin position="156"/>
        <end position="177"/>
    </location>
</feature>
<feature type="transmembrane region" description="Helical" evidence="1">
    <location>
        <begin position="178"/>
        <end position="198"/>
    </location>
</feature>
<feature type="topological domain" description="Periplasmic" evidence="1">
    <location>
        <begin position="199"/>
        <end position="261"/>
    </location>
</feature>
<feature type="transmembrane region" description="Helical" evidence="1">
    <location>
        <begin position="262"/>
        <end position="282"/>
    </location>
</feature>
<feature type="topological domain" description="Cytoplasmic" evidence="1">
    <location>
        <begin position="283"/>
        <end position="323"/>
    </location>
</feature>
<feature type="transmembrane region" description="Helical" evidence="1">
    <location>
        <begin position="324"/>
        <end position="344"/>
    </location>
</feature>
<feature type="topological domain" description="Periplasmic" evidence="1">
    <location>
        <begin position="345"/>
        <end position="355"/>
    </location>
</feature>
<sequence length="355" mass="38533">MAGFNIKHWFADGAFRTIIRNSAWLGSSNVVSALLGLLALSCAGKGMTPAMFGVLVIVQSYAKSISDFIKFQTWQLVVQYGTPALTNNNPQQFRNVVSFSFSLDIVSGAVAIVGGIALLPFLSHSLGLDDQSFWLAALYCTLIPSMASSTPTGILRAVDRFDLIAVQQATKPFLRAAGSVVAWYFDFGFAGFVIAWYVSNLVGGTMYWWFAARELRRRNIHNAFKLNLFESARYIKGAWSFVWSTNIAHSIWSARNSCSTVLVGIVLGPAAAGLFKIAMTFFDAAGTPAGLLGKSFYPEVMRLDPRTTRPWLLGVKSGLLAGGIGILVALAVLIVGKPLISLVFGVKYLEAYDLI</sequence>
<keyword id="KW-0997">Cell inner membrane</keyword>
<keyword id="KW-1003">Cell membrane</keyword>
<keyword id="KW-0472">Membrane</keyword>
<keyword id="KW-1185">Reference proteome</keyword>
<keyword id="KW-0812">Transmembrane</keyword>
<keyword id="KW-1133">Transmembrane helix</keyword>
<name>YGHQ_ECOLI</name>
<comment type="subcellular location">
    <subcellularLocation>
        <location>Cell inner membrane</location>
        <topology>Multi-pass membrane protein</topology>
    </subcellularLocation>
</comment>
<comment type="sequence caution" evidence="2">
    <conflict type="erroneous initiation">
        <sequence resource="EMBL-CDS" id="AAA69150"/>
    </conflict>
</comment>
<evidence type="ECO:0000255" key="1"/>
<evidence type="ECO:0000305" key="2"/>
<proteinExistence type="evidence at protein level"/>
<accession>Q46841</accession>
<accession>Q2M9L2</accession>
<organism>
    <name type="scientific">Escherichia coli (strain K12)</name>
    <dbReference type="NCBI Taxonomy" id="83333"/>
    <lineage>
        <taxon>Bacteria</taxon>
        <taxon>Pseudomonadati</taxon>
        <taxon>Pseudomonadota</taxon>
        <taxon>Gammaproteobacteria</taxon>
        <taxon>Enterobacterales</taxon>
        <taxon>Enterobacteriaceae</taxon>
        <taxon>Escherichia</taxon>
    </lineage>
</organism>